<feature type="chain" id="PRO_0000169220" description="Uncharacterized protein YfeD">
    <location>
        <begin position="1"/>
        <end position="130"/>
    </location>
</feature>
<protein>
    <recommendedName>
        <fullName>Uncharacterized protein YfeD</fullName>
    </recommendedName>
</protein>
<organism>
    <name type="scientific">Escherichia coli (strain K12)</name>
    <dbReference type="NCBI Taxonomy" id="83333"/>
    <lineage>
        <taxon>Bacteria</taxon>
        <taxon>Pseudomonadati</taxon>
        <taxon>Pseudomonadota</taxon>
        <taxon>Gammaproteobacteria</taxon>
        <taxon>Enterobacterales</taxon>
        <taxon>Enterobacteriaceae</taxon>
        <taxon>Escherichia</taxon>
    </lineage>
</organism>
<sequence length="130" mass="14910">MKRLRNKMTTEELAECLGVAKQTVNRWIREKGWKTEKFPGVKGGRARLILVDTQVCEFIQNTPAFHNTPMLMEAEERIAEYAPGARAPAYRQIINAIDNMTDIEQEKVAQFLSREGIRNFLARLDIDESA</sequence>
<reference key="1">
    <citation type="journal article" date="1990" name="J. Mol. Biol.">
        <title>Precise mapping and comparison of two evolutionarily related regions of the Escherichia coli K-12 chromosome. Evolution of valU and lysT from an ancestral tRNA operon.</title>
        <authorList>
            <person name="Brun Y.V."/>
            <person name="Breton R."/>
            <person name="Lanouette P."/>
            <person name="Lapointe J."/>
        </authorList>
    </citation>
    <scope>NUCLEOTIDE SEQUENCE [GENOMIC DNA]</scope>
    <source>
        <strain>K12</strain>
    </source>
</reference>
<reference key="2">
    <citation type="journal article" date="1997" name="DNA Res.">
        <title>Construction of a contiguous 874-kb sequence of the Escherichia coli-K12 genome corresponding to 50.0-68.8 min on the linkage map and analysis of its sequence features.</title>
        <authorList>
            <person name="Yamamoto Y."/>
            <person name="Aiba H."/>
            <person name="Baba T."/>
            <person name="Hayashi K."/>
            <person name="Inada T."/>
            <person name="Isono K."/>
            <person name="Itoh T."/>
            <person name="Kimura S."/>
            <person name="Kitagawa M."/>
            <person name="Makino K."/>
            <person name="Miki T."/>
            <person name="Mitsuhashi N."/>
            <person name="Mizobuchi K."/>
            <person name="Mori H."/>
            <person name="Nakade S."/>
            <person name="Nakamura Y."/>
            <person name="Nashimoto H."/>
            <person name="Oshima T."/>
            <person name="Oyama S."/>
            <person name="Saito N."/>
            <person name="Sampei G."/>
            <person name="Satoh Y."/>
            <person name="Sivasundaram S."/>
            <person name="Tagami H."/>
            <person name="Takahashi H."/>
            <person name="Takeda J."/>
            <person name="Takemoto K."/>
            <person name="Uehara K."/>
            <person name="Wada C."/>
            <person name="Yamagata S."/>
            <person name="Horiuchi T."/>
        </authorList>
    </citation>
    <scope>NUCLEOTIDE SEQUENCE [LARGE SCALE GENOMIC DNA]</scope>
    <source>
        <strain>K12 / W3110 / ATCC 27325 / DSM 5911</strain>
    </source>
</reference>
<reference key="3">
    <citation type="journal article" date="1997" name="Science">
        <title>The complete genome sequence of Escherichia coli K-12.</title>
        <authorList>
            <person name="Blattner F.R."/>
            <person name="Plunkett G. III"/>
            <person name="Bloch C.A."/>
            <person name="Perna N.T."/>
            <person name="Burland V."/>
            <person name="Riley M."/>
            <person name="Collado-Vides J."/>
            <person name="Glasner J.D."/>
            <person name="Rode C.K."/>
            <person name="Mayhew G.F."/>
            <person name="Gregor J."/>
            <person name="Davis N.W."/>
            <person name="Kirkpatrick H.A."/>
            <person name="Goeden M.A."/>
            <person name="Rose D.J."/>
            <person name="Mau B."/>
            <person name="Shao Y."/>
        </authorList>
    </citation>
    <scope>NUCLEOTIDE SEQUENCE [LARGE SCALE GENOMIC DNA]</scope>
    <source>
        <strain>K12 / MG1655 / ATCC 47076</strain>
    </source>
</reference>
<reference key="4">
    <citation type="journal article" date="2006" name="Mol. Syst. Biol.">
        <title>Highly accurate genome sequences of Escherichia coli K-12 strains MG1655 and W3110.</title>
        <authorList>
            <person name="Hayashi K."/>
            <person name="Morooka N."/>
            <person name="Yamamoto Y."/>
            <person name="Fujita K."/>
            <person name="Isono K."/>
            <person name="Choi S."/>
            <person name="Ohtsubo E."/>
            <person name="Baba T."/>
            <person name="Wanner B.L."/>
            <person name="Mori H."/>
            <person name="Horiuchi T."/>
        </authorList>
    </citation>
    <scope>NUCLEOTIDE SEQUENCE [LARGE SCALE GENOMIC DNA]</scope>
    <source>
        <strain>K12 / W3110 / ATCC 27325 / DSM 5911</strain>
    </source>
</reference>
<name>YFED_ECOLI</name>
<accession>P27238</accession>
<gene>
    <name type="primary">yfeD</name>
    <name type="ordered locus">b2399</name>
    <name type="ordered locus">JW2394</name>
</gene>
<dbReference type="EMBL" id="M13687">
    <property type="protein sequence ID" value="AAA65716.1"/>
    <property type="molecule type" value="Genomic_DNA"/>
</dbReference>
<dbReference type="EMBL" id="X63976">
    <property type="protein sequence ID" value="CAA45392.1"/>
    <property type="molecule type" value="Genomic_DNA"/>
</dbReference>
<dbReference type="EMBL" id="U00096">
    <property type="protein sequence ID" value="AAC75456.3"/>
    <property type="molecule type" value="Genomic_DNA"/>
</dbReference>
<dbReference type="EMBL" id="AP009048">
    <property type="protein sequence ID" value="BAA16271.1"/>
    <property type="molecule type" value="Genomic_DNA"/>
</dbReference>
<dbReference type="PIR" id="S11409">
    <property type="entry name" value="S11409"/>
</dbReference>
<dbReference type="RefSeq" id="NP_416898.3">
    <property type="nucleotide sequence ID" value="NC_000913.3"/>
</dbReference>
<dbReference type="RefSeq" id="WP_000826503.1">
    <property type="nucleotide sequence ID" value="NZ_STEB01000008.1"/>
</dbReference>
<dbReference type="SMR" id="P27238"/>
<dbReference type="BioGRID" id="4260571">
    <property type="interactions" value="15"/>
</dbReference>
<dbReference type="DIP" id="DIP-12013N"/>
<dbReference type="FunCoup" id="P27238">
    <property type="interactions" value="18"/>
</dbReference>
<dbReference type="IntAct" id="P27238">
    <property type="interactions" value="5"/>
</dbReference>
<dbReference type="STRING" id="511145.b2399"/>
<dbReference type="jPOST" id="P27238"/>
<dbReference type="PaxDb" id="511145-b2399"/>
<dbReference type="EnsemblBacteria" id="AAC75456">
    <property type="protein sequence ID" value="AAC75456"/>
    <property type="gene ID" value="b2399"/>
</dbReference>
<dbReference type="GeneID" id="946865"/>
<dbReference type="KEGG" id="ecj:JW2394"/>
<dbReference type="KEGG" id="eco:b2399"/>
<dbReference type="KEGG" id="ecoc:C3026_13330"/>
<dbReference type="PATRIC" id="fig|511145.12.peg.2494"/>
<dbReference type="EchoBASE" id="EB1402"/>
<dbReference type="eggNOG" id="COG3415">
    <property type="taxonomic scope" value="Bacteria"/>
</dbReference>
<dbReference type="HOGENOM" id="CLU_168146_0_0_6"/>
<dbReference type="InParanoid" id="P27238"/>
<dbReference type="OMA" id="WKTEGIN"/>
<dbReference type="OrthoDB" id="6538337at2"/>
<dbReference type="PhylomeDB" id="P27238"/>
<dbReference type="BioCyc" id="EcoCyc:EG11432-MONOMER"/>
<dbReference type="PRO" id="PR:P27238"/>
<dbReference type="Proteomes" id="UP000000625">
    <property type="component" value="Chromosome"/>
</dbReference>
<dbReference type="GO" id="GO:0003677">
    <property type="term" value="F:DNA binding"/>
    <property type="evidence" value="ECO:0007669"/>
    <property type="project" value="InterPro"/>
</dbReference>
<dbReference type="CDD" id="cd00093">
    <property type="entry name" value="HTH_XRE"/>
    <property type="match status" value="1"/>
</dbReference>
<dbReference type="Gene3D" id="1.10.260.40">
    <property type="entry name" value="lambda repressor-like DNA-binding domains"/>
    <property type="match status" value="1"/>
</dbReference>
<dbReference type="InterPro" id="IPR001387">
    <property type="entry name" value="Cro/C1-type_HTH"/>
</dbReference>
<dbReference type="InterPro" id="IPR009061">
    <property type="entry name" value="DNA-bd_dom_put_sf"/>
</dbReference>
<dbReference type="InterPro" id="IPR010982">
    <property type="entry name" value="Lambda_DNA-bd_dom_sf"/>
</dbReference>
<dbReference type="InterPro" id="IPR010749">
    <property type="entry name" value="YfeC-like"/>
</dbReference>
<dbReference type="Pfam" id="PF07037">
    <property type="entry name" value="YfeC-like"/>
    <property type="match status" value="1"/>
</dbReference>
<dbReference type="SUPFAM" id="SSF46955">
    <property type="entry name" value="Putative DNA-binding domain"/>
    <property type="match status" value="1"/>
</dbReference>
<keyword id="KW-1185">Reference proteome</keyword>
<proteinExistence type="predicted"/>